<gene>
    <name evidence="1" type="primary">rpsS</name>
    <name type="ordered locus">BQ08190</name>
</gene>
<dbReference type="EMBL" id="BX897700">
    <property type="protein sequence ID" value="CAF26302.1"/>
    <property type="molecule type" value="Genomic_DNA"/>
</dbReference>
<dbReference type="RefSeq" id="WP_011179548.1">
    <property type="nucleotide sequence ID" value="NC_005955.1"/>
</dbReference>
<dbReference type="SMR" id="Q6FZC6"/>
<dbReference type="GeneID" id="56532825"/>
<dbReference type="KEGG" id="bqu:BQ08190"/>
<dbReference type="eggNOG" id="COG0185">
    <property type="taxonomic scope" value="Bacteria"/>
</dbReference>
<dbReference type="HOGENOM" id="CLU_144911_0_1_5"/>
<dbReference type="OrthoDB" id="9797833at2"/>
<dbReference type="Proteomes" id="UP000000597">
    <property type="component" value="Chromosome"/>
</dbReference>
<dbReference type="GO" id="GO:0005737">
    <property type="term" value="C:cytoplasm"/>
    <property type="evidence" value="ECO:0007669"/>
    <property type="project" value="UniProtKB-ARBA"/>
</dbReference>
<dbReference type="GO" id="GO:0015935">
    <property type="term" value="C:small ribosomal subunit"/>
    <property type="evidence" value="ECO:0007669"/>
    <property type="project" value="InterPro"/>
</dbReference>
<dbReference type="GO" id="GO:0019843">
    <property type="term" value="F:rRNA binding"/>
    <property type="evidence" value="ECO:0007669"/>
    <property type="project" value="UniProtKB-UniRule"/>
</dbReference>
<dbReference type="GO" id="GO:0003735">
    <property type="term" value="F:structural constituent of ribosome"/>
    <property type="evidence" value="ECO:0007669"/>
    <property type="project" value="InterPro"/>
</dbReference>
<dbReference type="GO" id="GO:0000028">
    <property type="term" value="P:ribosomal small subunit assembly"/>
    <property type="evidence" value="ECO:0007669"/>
    <property type="project" value="TreeGrafter"/>
</dbReference>
<dbReference type="GO" id="GO:0006412">
    <property type="term" value="P:translation"/>
    <property type="evidence" value="ECO:0007669"/>
    <property type="project" value="UniProtKB-UniRule"/>
</dbReference>
<dbReference type="FunFam" id="3.30.860.10:FF:000001">
    <property type="entry name" value="30S ribosomal protein S19"/>
    <property type="match status" value="1"/>
</dbReference>
<dbReference type="Gene3D" id="3.30.860.10">
    <property type="entry name" value="30s Ribosomal Protein S19, Chain A"/>
    <property type="match status" value="1"/>
</dbReference>
<dbReference type="HAMAP" id="MF_00531">
    <property type="entry name" value="Ribosomal_uS19"/>
    <property type="match status" value="1"/>
</dbReference>
<dbReference type="InterPro" id="IPR002222">
    <property type="entry name" value="Ribosomal_uS19"/>
</dbReference>
<dbReference type="InterPro" id="IPR005732">
    <property type="entry name" value="Ribosomal_uS19_bac-type"/>
</dbReference>
<dbReference type="InterPro" id="IPR020934">
    <property type="entry name" value="Ribosomal_uS19_CS"/>
</dbReference>
<dbReference type="InterPro" id="IPR023575">
    <property type="entry name" value="Ribosomal_uS19_SF"/>
</dbReference>
<dbReference type="NCBIfam" id="TIGR01050">
    <property type="entry name" value="rpsS_bact"/>
    <property type="match status" value="1"/>
</dbReference>
<dbReference type="PANTHER" id="PTHR11880">
    <property type="entry name" value="RIBOSOMAL PROTEIN S19P FAMILY MEMBER"/>
    <property type="match status" value="1"/>
</dbReference>
<dbReference type="PANTHER" id="PTHR11880:SF8">
    <property type="entry name" value="SMALL RIBOSOMAL SUBUNIT PROTEIN US19M"/>
    <property type="match status" value="1"/>
</dbReference>
<dbReference type="Pfam" id="PF00203">
    <property type="entry name" value="Ribosomal_S19"/>
    <property type="match status" value="1"/>
</dbReference>
<dbReference type="PIRSF" id="PIRSF002144">
    <property type="entry name" value="Ribosomal_S19"/>
    <property type="match status" value="1"/>
</dbReference>
<dbReference type="PRINTS" id="PR00975">
    <property type="entry name" value="RIBOSOMALS19"/>
</dbReference>
<dbReference type="SUPFAM" id="SSF54570">
    <property type="entry name" value="Ribosomal protein S19"/>
    <property type="match status" value="1"/>
</dbReference>
<dbReference type="PROSITE" id="PS00323">
    <property type="entry name" value="RIBOSOMAL_S19"/>
    <property type="match status" value="1"/>
</dbReference>
<organism>
    <name type="scientific">Bartonella quintana (strain Toulouse)</name>
    <name type="common">Rochalimaea quintana</name>
    <dbReference type="NCBI Taxonomy" id="283165"/>
    <lineage>
        <taxon>Bacteria</taxon>
        <taxon>Pseudomonadati</taxon>
        <taxon>Pseudomonadota</taxon>
        <taxon>Alphaproteobacteria</taxon>
        <taxon>Hyphomicrobiales</taxon>
        <taxon>Bartonellaceae</taxon>
        <taxon>Bartonella</taxon>
    </lineage>
</organism>
<accession>Q6FZC6</accession>
<comment type="function">
    <text evidence="1">Protein S19 forms a complex with S13 that binds strongly to the 16S ribosomal RNA.</text>
</comment>
<comment type="similarity">
    <text evidence="1">Belongs to the universal ribosomal protein uS19 family.</text>
</comment>
<sequence>MVRSVWKGPFVDGYLLGKAEKVRSSGRNEVIKIWSRRSTILPQFVGLTFGVHNGNKHIPVSVSEEMVGHKFGEFAPTRTYYGHGADKKAKRK</sequence>
<reference key="1">
    <citation type="journal article" date="2004" name="Proc. Natl. Acad. Sci. U.S.A.">
        <title>The louse-borne human pathogen Bartonella quintana is a genomic derivative of the zoonotic agent Bartonella henselae.</title>
        <authorList>
            <person name="Alsmark U.C.M."/>
            <person name="Frank A.C."/>
            <person name="Karlberg E.O."/>
            <person name="Legault B.-A."/>
            <person name="Ardell D.H."/>
            <person name="Canbaeck B."/>
            <person name="Eriksson A.-S."/>
            <person name="Naeslund A.K."/>
            <person name="Handley S.A."/>
            <person name="Huvet M."/>
            <person name="La Scola B."/>
            <person name="Holmberg M."/>
            <person name="Andersson S.G.E."/>
        </authorList>
    </citation>
    <scope>NUCLEOTIDE SEQUENCE [LARGE SCALE GENOMIC DNA]</scope>
    <source>
        <strain>Toulouse</strain>
    </source>
</reference>
<protein>
    <recommendedName>
        <fullName evidence="1">Small ribosomal subunit protein uS19</fullName>
    </recommendedName>
    <alternativeName>
        <fullName evidence="2">30S ribosomal protein S19</fullName>
    </alternativeName>
</protein>
<evidence type="ECO:0000255" key="1">
    <source>
        <dbReference type="HAMAP-Rule" id="MF_00531"/>
    </source>
</evidence>
<evidence type="ECO:0000305" key="2"/>
<keyword id="KW-0687">Ribonucleoprotein</keyword>
<keyword id="KW-0689">Ribosomal protein</keyword>
<keyword id="KW-0694">RNA-binding</keyword>
<keyword id="KW-0699">rRNA-binding</keyword>
<name>RS19_BARQU</name>
<feature type="chain" id="PRO_0000129783" description="Small ribosomal subunit protein uS19">
    <location>
        <begin position="1"/>
        <end position="92"/>
    </location>
</feature>
<proteinExistence type="inferred from homology"/>